<name>GFPL_DISST</name>
<keyword id="KW-0002">3D-structure</keyword>
<keyword id="KW-0157">Chromophore</keyword>
<keyword id="KW-0455">Luminescence</keyword>
<keyword id="KW-0599">Photoprotein</keyword>
<protein>
    <recommendedName>
        <fullName>GFP-like fluorescent chromoprotein dsFP483</fullName>
    </recommendedName>
</protein>
<organism>
    <name type="scientific">Discosoma striata</name>
    <name type="common">Striped mushroom</name>
    <dbReference type="NCBI Taxonomy" id="105400"/>
    <lineage>
        <taxon>Eukaryota</taxon>
        <taxon>Metazoa</taxon>
        <taxon>Cnidaria</taxon>
        <taxon>Anthozoa</taxon>
        <taxon>Hexacorallia</taxon>
        <taxon>Corallimorpharia</taxon>
        <taxon>Discosomidae</taxon>
        <taxon>Discosoma</taxon>
    </lineage>
</organism>
<reference evidence="3 4" key="1">
    <citation type="journal article" date="1999" name="Nat. Biotechnol.">
        <title>Fluorescent proteins from nonbioluminescent Anthozoa species.</title>
        <authorList>
            <person name="Matz M.V."/>
            <person name="Fradkov A.F."/>
            <person name="Labas Y.A."/>
            <person name="Savitsky A.P."/>
            <person name="Zaraisky A.G."/>
            <person name="Markelov M.L."/>
            <person name="Lukyanov S.A."/>
        </authorList>
    </citation>
    <scope>NUCLEOTIDE SEQUENCE [MRNA]</scope>
    <scope>FUNCTION</scope>
    <scope>TISSUE SPECIFICITY</scope>
</reference>
<accession>Q9U6Y7</accession>
<sequence length="232" mass="26435">MSCSKSVIKEEMLIDLHLEGTFNGHYFEIKGKGKGQPNEGTNTVTLEVTKGGPLPFGWHILCPQFQYGNKAFVHHPDNIHDYLKLSFPEGYTWERSMHFEDGGLCCITNDISLTGNCFYYDIKFTGLNFPPNGPVVQKKTTGWEPSTERLYPRDGVLIGDIHHALTVEGGGHYACDIKTVYRAKKAALKMPGYHYVDTKLVIWNNDKEFMKVEEHEIAVARHHPFYEPKKDK</sequence>
<feature type="chain" id="PRO_0000192581" description="GFP-like fluorescent chromoprotein dsFP483">
    <location>
        <begin position="1"/>
        <end position="232"/>
    </location>
</feature>
<feature type="modified residue" description="2,3-didehydrotyrosine" evidence="1">
    <location>
        <position position="67"/>
    </location>
</feature>
<feature type="cross-link" description="2-iminomethyl-5-imidazolinone (Gln-Gly)" evidence="1">
    <location>
        <begin position="66"/>
        <end position="68"/>
    </location>
</feature>
<feature type="helix" evidence="5">
    <location>
        <begin position="3"/>
        <end position="6"/>
    </location>
</feature>
<feature type="strand" evidence="5">
    <location>
        <begin position="10"/>
        <end position="22"/>
    </location>
</feature>
<feature type="strand" evidence="5">
    <location>
        <begin position="25"/>
        <end position="36"/>
    </location>
</feature>
<feature type="turn" evidence="5">
    <location>
        <begin position="37"/>
        <end position="40"/>
    </location>
</feature>
<feature type="strand" evidence="5">
    <location>
        <begin position="41"/>
        <end position="51"/>
    </location>
</feature>
<feature type="helix" evidence="5">
    <location>
        <begin position="58"/>
        <end position="61"/>
    </location>
</feature>
<feature type="turn" evidence="5">
    <location>
        <begin position="62"/>
        <end position="64"/>
    </location>
</feature>
<feature type="strand" evidence="5">
    <location>
        <begin position="72"/>
        <end position="74"/>
    </location>
</feature>
<feature type="helix" evidence="5">
    <location>
        <begin position="82"/>
        <end position="85"/>
    </location>
</feature>
<feature type="turn" evidence="5">
    <location>
        <begin position="86"/>
        <end position="89"/>
    </location>
</feature>
<feature type="strand" evidence="5">
    <location>
        <begin position="91"/>
        <end position="99"/>
    </location>
</feature>
<feature type="strand" evidence="5">
    <location>
        <begin position="104"/>
        <end position="114"/>
    </location>
</feature>
<feature type="strand" evidence="5">
    <location>
        <begin position="117"/>
        <end position="127"/>
    </location>
</feature>
<feature type="turn" evidence="5">
    <location>
        <begin position="134"/>
        <end position="138"/>
    </location>
</feature>
<feature type="strand" evidence="5">
    <location>
        <begin position="140"/>
        <end position="143"/>
    </location>
</feature>
<feature type="strand" evidence="5">
    <location>
        <begin position="146"/>
        <end position="153"/>
    </location>
</feature>
<feature type="strand" evidence="5">
    <location>
        <begin position="156"/>
        <end position="167"/>
    </location>
</feature>
<feature type="strand" evidence="5">
    <location>
        <begin position="172"/>
        <end position="185"/>
    </location>
</feature>
<feature type="strand" evidence="5">
    <location>
        <begin position="193"/>
        <end position="205"/>
    </location>
</feature>
<feature type="strand" evidence="5">
    <location>
        <begin position="209"/>
        <end position="221"/>
    </location>
</feature>
<evidence type="ECO:0000250" key="1">
    <source>
        <dbReference type="UniProtKB" id="Q9U6Y8"/>
    </source>
</evidence>
<evidence type="ECO:0000269" key="2">
    <source>
    </source>
</evidence>
<evidence type="ECO:0000305" key="3"/>
<evidence type="ECO:0000312" key="4">
    <source>
        <dbReference type="EMBL" id="AAF03370.1"/>
    </source>
</evidence>
<evidence type="ECO:0007829" key="5">
    <source>
        <dbReference type="PDB" id="3CGL"/>
    </source>
</evidence>
<dbReference type="EMBL" id="AF168420">
    <property type="protein sequence ID" value="AAF03370.1"/>
    <property type="molecule type" value="mRNA"/>
</dbReference>
<dbReference type="PDB" id="3CGL">
    <property type="method" value="X-ray"/>
    <property type="resolution" value="2.09 A"/>
    <property type="chains" value="A/B/C/D/E/F=1-232"/>
</dbReference>
<dbReference type="PDBsum" id="3CGL"/>
<dbReference type="SMR" id="Q9U6Y7"/>
<dbReference type="EvolutionaryTrace" id="Q9U6Y7"/>
<dbReference type="GO" id="GO:0008218">
    <property type="term" value="P:bioluminescence"/>
    <property type="evidence" value="ECO:0007669"/>
    <property type="project" value="UniProtKB-KW"/>
</dbReference>
<dbReference type="GO" id="GO:0006091">
    <property type="term" value="P:generation of precursor metabolites and energy"/>
    <property type="evidence" value="ECO:0007669"/>
    <property type="project" value="InterPro"/>
</dbReference>
<dbReference type="Gene3D" id="2.40.155.10">
    <property type="entry name" value="Green fluorescent protein"/>
    <property type="match status" value="1"/>
</dbReference>
<dbReference type="InterPro" id="IPR009017">
    <property type="entry name" value="GFP"/>
</dbReference>
<dbReference type="InterPro" id="IPR011584">
    <property type="entry name" value="GFP-related"/>
</dbReference>
<dbReference type="InterPro" id="IPR000786">
    <property type="entry name" value="Green_fluorescent_prot"/>
</dbReference>
<dbReference type="Pfam" id="PF01353">
    <property type="entry name" value="GFP"/>
    <property type="match status" value="1"/>
</dbReference>
<dbReference type="PRINTS" id="PR01229">
    <property type="entry name" value="GFLUORESCENT"/>
</dbReference>
<dbReference type="SUPFAM" id="SSF54511">
    <property type="entry name" value="GFP-like"/>
    <property type="match status" value="1"/>
</dbReference>
<proteinExistence type="evidence at protein level"/>
<comment type="function">
    <text evidence="2">Pigment protein that is green in color.</text>
</comment>
<comment type="biophysicochemical properties">
    <absorption>
        <max>443 nm</max>
        <text>Has a strong fluorescence emission spectrum which peaks at 483 nm.</text>
    </absorption>
</comment>
<comment type="tissue specificity">
    <text evidence="2">Oral disk.</text>
</comment>
<comment type="PTM">
    <text>Contains a chromophore consisting of modified amino acid residues. The chromophore is formed by autocatalytic backbone condensation between Xaa-N and Gly-(N+2), oxidation of Tyr-(N+1) to didehydrotyrosine, and formation of a double bond to the alpha-amino nitrogen of residue Xaa-N. Maturation of the chromophore requires nothing other than molecular oxygen. The precise stereochemistry of the tyrosine has not been determined.</text>
</comment>
<comment type="biotechnology">
    <text evidence="3">Fluorescent proteins have become a useful and ubiquitous tool for making chimeric proteins, where they function as a fluorescent protein tag. Typically they tolerate N- and C-terminal fusion to a broad variety of proteins. They have been expressed in most known cell types and are used as a noninvasive fluorescent marker in living cells and organisms. They enable a wide range of applications where they have functioned as a cell lineage tracer, reporter of gene expression, or as a measure of protein-protein interactions.</text>
</comment>
<comment type="similarity">
    <text evidence="2">Belongs to the GFP family.</text>
</comment>